<protein>
    <recommendedName>
        <fullName evidence="1">AAA ATPase forming ring-shaped complexes</fullName>
        <shortName evidence="1">ARC</shortName>
    </recommendedName>
</protein>
<name>ARC_ROTMD</name>
<sequence length="608" mass="64970">MSTHESADQAGTPQYGTAHSAASAAPHYSAAFGATSLPGSQPVSAQEYDAVLRRLSAAEATRDNMSRQIRGAGEKNRKLVEAITSMRYQVERLRASLSQNVMPPLNSAIVLAVHEGQTMTYEQVADDKTPAEIDTYLDVQVSGRMMRIPVSPLIDLSTLTPGMTVLLNDKTEAVLALDTEPFGDVVTVREVLDEQRVLVDTSSGAQQVARVAGSLNIEQLRTGDAVTLDTRTRMLTSQVPASRSQELVLEEIPDVTYEQIGGLGAQIEQIRDAVELPYLHPEIFERYHLAPPKGILLYGPPGNGKTMIAKAVANSLAARAAALNPGSATRGYFLNIKGPELLDKFVGETERQIRDIFVAAREKAEAGHPVVVFFDEMESLFRMRGSGRSSDIETTIVPQLLAEIDGVESLQNVIVIGATNREDLIDAAVMRPGRLDLKIRINRPDAAGAAEIFGLYLTEDLPLDATEVAAAGSTRAALTAMIAAAAGQLYARTPSTAYAVATVDSSMVVGSGASANLSTHTLYRGDFASGAVIRNIVDRAKKAAIKEQLQALTAGADASSVGIGTRHLLEAVRAEFEDQVDLPPLPDIEDALTVAGVRGRLVSVEPPR</sequence>
<gene>
    <name evidence="1" type="primary">arc</name>
    <name type="ordered locus">RMDY18_10330</name>
</gene>
<feature type="chain" id="PRO_0000397015" description="AAA ATPase forming ring-shaped complexes">
    <location>
        <begin position="1"/>
        <end position="608"/>
    </location>
</feature>
<feature type="coiled-coil region" evidence="1">
    <location>
        <begin position="45"/>
        <end position="79"/>
    </location>
</feature>
<feature type="binding site" evidence="1">
    <location>
        <begin position="302"/>
        <end position="307"/>
    </location>
    <ligand>
        <name>ATP</name>
        <dbReference type="ChEBI" id="CHEBI:30616"/>
    </ligand>
</feature>
<keyword id="KW-0067">ATP-binding</keyword>
<keyword id="KW-0175">Coiled coil</keyword>
<keyword id="KW-0547">Nucleotide-binding</keyword>
<keyword id="KW-1185">Reference proteome</keyword>
<evidence type="ECO:0000255" key="1">
    <source>
        <dbReference type="HAMAP-Rule" id="MF_02112"/>
    </source>
</evidence>
<evidence type="ECO:0000305" key="2"/>
<dbReference type="EMBL" id="AP011540">
    <property type="protein sequence ID" value="BAI64865.1"/>
    <property type="status" value="ALT_INIT"/>
    <property type="molecule type" value="Genomic_DNA"/>
</dbReference>
<dbReference type="RefSeq" id="WP_044150438.1">
    <property type="nucleotide sequence ID" value="NC_013715.1"/>
</dbReference>
<dbReference type="SMR" id="D2NT89"/>
<dbReference type="STRING" id="680646.RMDY18_10330"/>
<dbReference type="KEGG" id="rmu:RMDY18_10330"/>
<dbReference type="eggNOG" id="COG1222">
    <property type="taxonomic scope" value="Bacteria"/>
</dbReference>
<dbReference type="HOGENOM" id="CLU_036054_0_0_11"/>
<dbReference type="Proteomes" id="UP000001883">
    <property type="component" value="Chromosome"/>
</dbReference>
<dbReference type="GO" id="GO:0000502">
    <property type="term" value="C:proteasome complex"/>
    <property type="evidence" value="ECO:0007669"/>
    <property type="project" value="InterPro"/>
</dbReference>
<dbReference type="GO" id="GO:0005524">
    <property type="term" value="F:ATP binding"/>
    <property type="evidence" value="ECO:0007669"/>
    <property type="project" value="UniProtKB-UniRule"/>
</dbReference>
<dbReference type="GO" id="GO:0016887">
    <property type="term" value="F:ATP hydrolysis activity"/>
    <property type="evidence" value="ECO:0007669"/>
    <property type="project" value="UniProtKB-UniRule"/>
</dbReference>
<dbReference type="GO" id="GO:0019941">
    <property type="term" value="P:modification-dependent protein catabolic process"/>
    <property type="evidence" value="ECO:0007669"/>
    <property type="project" value="InterPro"/>
</dbReference>
<dbReference type="GO" id="GO:0010498">
    <property type="term" value="P:proteasomal protein catabolic process"/>
    <property type="evidence" value="ECO:0007669"/>
    <property type="project" value="InterPro"/>
</dbReference>
<dbReference type="FunFam" id="3.40.50.300:FF:001025">
    <property type="entry name" value="ATPase family, AAA domain-containing 2B"/>
    <property type="match status" value="1"/>
</dbReference>
<dbReference type="Gene3D" id="1.10.8.60">
    <property type="match status" value="1"/>
</dbReference>
<dbReference type="Gene3D" id="2.40.50.140">
    <property type="entry name" value="Nucleic acid-binding proteins"/>
    <property type="match status" value="2"/>
</dbReference>
<dbReference type="Gene3D" id="3.40.50.300">
    <property type="entry name" value="P-loop containing nucleotide triphosphate hydrolases"/>
    <property type="match status" value="1"/>
</dbReference>
<dbReference type="HAMAP" id="MF_02112">
    <property type="entry name" value="ARC_ATPase"/>
    <property type="match status" value="1"/>
</dbReference>
<dbReference type="InterPro" id="IPR003593">
    <property type="entry name" value="AAA+_ATPase"/>
</dbReference>
<dbReference type="InterPro" id="IPR050168">
    <property type="entry name" value="AAA_ATPase_domain"/>
</dbReference>
<dbReference type="InterPro" id="IPR003959">
    <property type="entry name" value="ATPase_AAA_core"/>
</dbReference>
<dbReference type="InterPro" id="IPR003960">
    <property type="entry name" value="ATPase_AAA_CS"/>
</dbReference>
<dbReference type="InterPro" id="IPR012340">
    <property type="entry name" value="NA-bd_OB-fold"/>
</dbReference>
<dbReference type="InterPro" id="IPR027417">
    <property type="entry name" value="P-loop_NTPase"/>
</dbReference>
<dbReference type="InterPro" id="IPR032501">
    <property type="entry name" value="Prot_ATP_ID_OB_2nd"/>
</dbReference>
<dbReference type="InterPro" id="IPR041626">
    <property type="entry name" value="Prot_ATP_ID_OB_N"/>
</dbReference>
<dbReference type="InterPro" id="IPR022482">
    <property type="entry name" value="Proteasome_ATPase"/>
</dbReference>
<dbReference type="NCBIfam" id="TIGR03689">
    <property type="entry name" value="pup_AAA"/>
    <property type="match status" value="1"/>
</dbReference>
<dbReference type="PANTHER" id="PTHR23077">
    <property type="entry name" value="AAA-FAMILY ATPASE"/>
    <property type="match status" value="1"/>
</dbReference>
<dbReference type="PANTHER" id="PTHR23077:SF144">
    <property type="entry name" value="PROTEASOME-ASSOCIATED ATPASE"/>
    <property type="match status" value="1"/>
</dbReference>
<dbReference type="Pfam" id="PF00004">
    <property type="entry name" value="AAA"/>
    <property type="match status" value="1"/>
</dbReference>
<dbReference type="Pfam" id="PF16450">
    <property type="entry name" value="Prot_ATP_ID_OB_C"/>
    <property type="match status" value="1"/>
</dbReference>
<dbReference type="Pfam" id="PF17758">
    <property type="entry name" value="Prot_ATP_ID_OB_N"/>
    <property type="match status" value="1"/>
</dbReference>
<dbReference type="SMART" id="SM00382">
    <property type="entry name" value="AAA"/>
    <property type="match status" value="1"/>
</dbReference>
<dbReference type="SUPFAM" id="SSF52540">
    <property type="entry name" value="P-loop containing nucleoside triphosphate hydrolases"/>
    <property type="match status" value="1"/>
</dbReference>
<dbReference type="PROSITE" id="PS00674">
    <property type="entry name" value="AAA"/>
    <property type="match status" value="1"/>
</dbReference>
<comment type="subunit">
    <text evidence="1">Homohexamer. Assembles into a hexameric ring structure.</text>
</comment>
<comment type="similarity">
    <text evidence="1">Belongs to the AAA ATPase family.</text>
</comment>
<comment type="sequence caution" evidence="2">
    <conflict type="erroneous initiation">
        <sequence resource="EMBL-CDS" id="BAI64865"/>
    </conflict>
    <text>Extended N-terminus.</text>
</comment>
<reference key="1">
    <citation type="submission" date="2009-07" db="EMBL/GenBank/DDBJ databases">
        <title>Complete genome sequence of Rothia mucilaginosa DJ.</title>
        <authorList>
            <person name="Yamane K."/>
            <person name="Nambu T."/>
            <person name="Mashimo C."/>
            <person name="Sugimori C."/>
            <person name="Yamanaka T."/>
            <person name="Leung K."/>
            <person name="Fukushima H."/>
        </authorList>
    </citation>
    <scope>NUCLEOTIDE SEQUENCE [LARGE SCALE GENOMIC DNA]</scope>
    <source>
        <strain>DY-18</strain>
    </source>
</reference>
<proteinExistence type="inferred from homology"/>
<organism>
    <name type="scientific">Rothia mucilaginosa (strain DY-18)</name>
    <name type="common">Stomatococcus mucilaginosus</name>
    <dbReference type="NCBI Taxonomy" id="680646"/>
    <lineage>
        <taxon>Bacteria</taxon>
        <taxon>Bacillati</taxon>
        <taxon>Actinomycetota</taxon>
        <taxon>Actinomycetes</taxon>
        <taxon>Micrococcales</taxon>
        <taxon>Micrococcaceae</taxon>
        <taxon>Rothia</taxon>
    </lineage>
</organism>
<accession>D2NT89</accession>